<sequence length="214" mass="23733">MRIILLGAPGAGKGTQAQFIMGKYGIPQISTGDMLRAAVKAGTELGKQAKEIMDAGKLVTDELVIALVKERIAQDDCRNGFLLDGFPRTIPQADAMKDAGIDVDYVIEFAVPDELIIDRIIGRRVHAASGRVYHVKFNPPKVEDKDDVTGEDLSVRKDDQEDTVRKRLVEYHQQTAPLVSYYQKEADAGNTRYFKVEGTRKVEEVRAELETILG</sequence>
<name>KAD_PECAS</name>
<feature type="chain" id="PRO_0000158771" description="Adenylate kinase">
    <location>
        <begin position="1"/>
        <end position="214"/>
    </location>
</feature>
<feature type="region of interest" description="NMP" evidence="1">
    <location>
        <begin position="30"/>
        <end position="59"/>
    </location>
</feature>
<feature type="region of interest" description="LID">
    <location>
        <begin position="122"/>
        <end position="159"/>
    </location>
</feature>
<feature type="binding site" evidence="1">
    <location>
        <begin position="10"/>
        <end position="15"/>
    </location>
    <ligand>
        <name>ATP</name>
        <dbReference type="ChEBI" id="CHEBI:30616"/>
    </ligand>
</feature>
<feature type="binding site" evidence="1">
    <location>
        <position position="31"/>
    </location>
    <ligand>
        <name>AMP</name>
        <dbReference type="ChEBI" id="CHEBI:456215"/>
    </ligand>
</feature>
<feature type="binding site" evidence="1">
    <location>
        <position position="36"/>
    </location>
    <ligand>
        <name>AMP</name>
        <dbReference type="ChEBI" id="CHEBI:456215"/>
    </ligand>
</feature>
<feature type="binding site" evidence="1">
    <location>
        <begin position="57"/>
        <end position="59"/>
    </location>
    <ligand>
        <name>AMP</name>
        <dbReference type="ChEBI" id="CHEBI:456215"/>
    </ligand>
</feature>
<feature type="binding site" evidence="1">
    <location>
        <begin position="85"/>
        <end position="88"/>
    </location>
    <ligand>
        <name>AMP</name>
        <dbReference type="ChEBI" id="CHEBI:456215"/>
    </ligand>
</feature>
<feature type="binding site" evidence="1">
    <location>
        <position position="92"/>
    </location>
    <ligand>
        <name>AMP</name>
        <dbReference type="ChEBI" id="CHEBI:456215"/>
    </ligand>
</feature>
<feature type="binding site" evidence="1">
    <location>
        <position position="123"/>
    </location>
    <ligand>
        <name>ATP</name>
        <dbReference type="ChEBI" id="CHEBI:30616"/>
    </ligand>
</feature>
<feature type="binding site" evidence="1">
    <location>
        <begin position="132"/>
        <end position="133"/>
    </location>
    <ligand>
        <name>ATP</name>
        <dbReference type="ChEBI" id="CHEBI:30616"/>
    </ligand>
</feature>
<feature type="binding site" evidence="1">
    <location>
        <position position="156"/>
    </location>
    <ligand>
        <name>AMP</name>
        <dbReference type="ChEBI" id="CHEBI:456215"/>
    </ligand>
</feature>
<feature type="binding site" evidence="1">
    <location>
        <position position="167"/>
    </location>
    <ligand>
        <name>AMP</name>
        <dbReference type="ChEBI" id="CHEBI:456215"/>
    </ligand>
</feature>
<feature type="binding site" evidence="1">
    <location>
        <position position="200"/>
    </location>
    <ligand>
        <name>ATP</name>
        <dbReference type="ChEBI" id="CHEBI:30616"/>
    </ligand>
</feature>
<dbReference type="EC" id="2.7.4.3" evidence="1"/>
<dbReference type="EMBL" id="BX950851">
    <property type="protein sequence ID" value="CAG74090.1"/>
    <property type="molecule type" value="Genomic_DNA"/>
</dbReference>
<dbReference type="RefSeq" id="WP_011092771.1">
    <property type="nucleotide sequence ID" value="NC_004547.2"/>
</dbReference>
<dbReference type="SMR" id="Q6D7Z5"/>
<dbReference type="STRING" id="218491.ECA1180"/>
<dbReference type="GeneID" id="57207992"/>
<dbReference type="KEGG" id="eca:ECA1180"/>
<dbReference type="PATRIC" id="fig|218491.5.peg.1196"/>
<dbReference type="eggNOG" id="COG0563">
    <property type="taxonomic scope" value="Bacteria"/>
</dbReference>
<dbReference type="HOGENOM" id="CLU_032354_1_2_6"/>
<dbReference type="OrthoDB" id="9805030at2"/>
<dbReference type="UniPathway" id="UPA00588">
    <property type="reaction ID" value="UER00649"/>
</dbReference>
<dbReference type="Proteomes" id="UP000007966">
    <property type="component" value="Chromosome"/>
</dbReference>
<dbReference type="GO" id="GO:0005737">
    <property type="term" value="C:cytoplasm"/>
    <property type="evidence" value="ECO:0007669"/>
    <property type="project" value="UniProtKB-SubCell"/>
</dbReference>
<dbReference type="GO" id="GO:0004017">
    <property type="term" value="F:adenylate kinase activity"/>
    <property type="evidence" value="ECO:0007669"/>
    <property type="project" value="UniProtKB-UniRule"/>
</dbReference>
<dbReference type="GO" id="GO:0005524">
    <property type="term" value="F:ATP binding"/>
    <property type="evidence" value="ECO:0007669"/>
    <property type="project" value="UniProtKB-UniRule"/>
</dbReference>
<dbReference type="GO" id="GO:0044209">
    <property type="term" value="P:AMP salvage"/>
    <property type="evidence" value="ECO:0007669"/>
    <property type="project" value="UniProtKB-UniRule"/>
</dbReference>
<dbReference type="CDD" id="cd01428">
    <property type="entry name" value="ADK"/>
    <property type="match status" value="1"/>
</dbReference>
<dbReference type="FunFam" id="3.40.50.300:FF:000106">
    <property type="entry name" value="Adenylate kinase mitochondrial"/>
    <property type="match status" value="1"/>
</dbReference>
<dbReference type="Gene3D" id="3.40.50.300">
    <property type="entry name" value="P-loop containing nucleotide triphosphate hydrolases"/>
    <property type="match status" value="1"/>
</dbReference>
<dbReference type="HAMAP" id="MF_00235">
    <property type="entry name" value="Adenylate_kinase_Adk"/>
    <property type="match status" value="1"/>
</dbReference>
<dbReference type="InterPro" id="IPR006259">
    <property type="entry name" value="Adenyl_kin_sub"/>
</dbReference>
<dbReference type="InterPro" id="IPR000850">
    <property type="entry name" value="Adenylat/UMP-CMP_kin"/>
</dbReference>
<dbReference type="InterPro" id="IPR033690">
    <property type="entry name" value="Adenylat_kinase_CS"/>
</dbReference>
<dbReference type="InterPro" id="IPR007862">
    <property type="entry name" value="Adenylate_kinase_lid-dom"/>
</dbReference>
<dbReference type="InterPro" id="IPR027417">
    <property type="entry name" value="P-loop_NTPase"/>
</dbReference>
<dbReference type="NCBIfam" id="TIGR01351">
    <property type="entry name" value="adk"/>
    <property type="match status" value="1"/>
</dbReference>
<dbReference type="NCBIfam" id="NF001379">
    <property type="entry name" value="PRK00279.1-1"/>
    <property type="match status" value="1"/>
</dbReference>
<dbReference type="NCBIfam" id="NF001380">
    <property type="entry name" value="PRK00279.1-2"/>
    <property type="match status" value="1"/>
</dbReference>
<dbReference type="NCBIfam" id="NF001381">
    <property type="entry name" value="PRK00279.1-3"/>
    <property type="match status" value="1"/>
</dbReference>
<dbReference type="NCBIfam" id="NF011100">
    <property type="entry name" value="PRK14527.1"/>
    <property type="match status" value="1"/>
</dbReference>
<dbReference type="PANTHER" id="PTHR23359">
    <property type="entry name" value="NUCLEOTIDE KINASE"/>
    <property type="match status" value="1"/>
</dbReference>
<dbReference type="Pfam" id="PF00406">
    <property type="entry name" value="ADK"/>
    <property type="match status" value="1"/>
</dbReference>
<dbReference type="Pfam" id="PF05191">
    <property type="entry name" value="ADK_lid"/>
    <property type="match status" value="1"/>
</dbReference>
<dbReference type="PRINTS" id="PR00094">
    <property type="entry name" value="ADENYLTKNASE"/>
</dbReference>
<dbReference type="SUPFAM" id="SSF52540">
    <property type="entry name" value="P-loop containing nucleoside triphosphate hydrolases"/>
    <property type="match status" value="1"/>
</dbReference>
<dbReference type="PROSITE" id="PS00113">
    <property type="entry name" value="ADENYLATE_KINASE"/>
    <property type="match status" value="1"/>
</dbReference>
<proteinExistence type="inferred from homology"/>
<evidence type="ECO:0000255" key="1">
    <source>
        <dbReference type="HAMAP-Rule" id="MF_00235"/>
    </source>
</evidence>
<gene>
    <name evidence="1" type="primary">adk</name>
    <name type="ordered locus">ECA1180</name>
</gene>
<organism>
    <name type="scientific">Pectobacterium atrosepticum (strain SCRI 1043 / ATCC BAA-672)</name>
    <name type="common">Erwinia carotovora subsp. atroseptica</name>
    <dbReference type="NCBI Taxonomy" id="218491"/>
    <lineage>
        <taxon>Bacteria</taxon>
        <taxon>Pseudomonadati</taxon>
        <taxon>Pseudomonadota</taxon>
        <taxon>Gammaproteobacteria</taxon>
        <taxon>Enterobacterales</taxon>
        <taxon>Pectobacteriaceae</taxon>
        <taxon>Pectobacterium</taxon>
    </lineage>
</organism>
<comment type="function">
    <text evidence="1">Catalyzes the reversible transfer of the terminal phosphate group between ATP and AMP. Plays an important role in cellular energy homeostasis and in adenine nucleotide metabolism.</text>
</comment>
<comment type="catalytic activity">
    <reaction evidence="1">
        <text>AMP + ATP = 2 ADP</text>
        <dbReference type="Rhea" id="RHEA:12973"/>
        <dbReference type="ChEBI" id="CHEBI:30616"/>
        <dbReference type="ChEBI" id="CHEBI:456215"/>
        <dbReference type="ChEBI" id="CHEBI:456216"/>
        <dbReference type="EC" id="2.7.4.3"/>
    </reaction>
</comment>
<comment type="pathway">
    <text evidence="1">Purine metabolism; AMP biosynthesis via salvage pathway; AMP from ADP: step 1/1.</text>
</comment>
<comment type="subunit">
    <text evidence="1">Monomer.</text>
</comment>
<comment type="subcellular location">
    <subcellularLocation>
        <location evidence="1">Cytoplasm</location>
    </subcellularLocation>
</comment>
<comment type="domain">
    <text evidence="1">Consists of three domains, a large central CORE domain and two small peripheral domains, NMPbind and LID, which undergo movements during catalysis. The LID domain closes over the site of phosphoryl transfer upon ATP binding. Assembling and dissambling the active center during each catalytic cycle provides an effective means to prevent ATP hydrolysis.</text>
</comment>
<comment type="similarity">
    <text evidence="1">Belongs to the adenylate kinase family.</text>
</comment>
<accession>Q6D7Z5</accession>
<keyword id="KW-0067">ATP-binding</keyword>
<keyword id="KW-0963">Cytoplasm</keyword>
<keyword id="KW-0418">Kinase</keyword>
<keyword id="KW-0545">Nucleotide biosynthesis</keyword>
<keyword id="KW-0547">Nucleotide-binding</keyword>
<keyword id="KW-1185">Reference proteome</keyword>
<keyword id="KW-0808">Transferase</keyword>
<reference key="1">
    <citation type="journal article" date="2004" name="Proc. Natl. Acad. Sci. U.S.A.">
        <title>Genome sequence of the enterobacterial phytopathogen Erwinia carotovora subsp. atroseptica and characterization of virulence factors.</title>
        <authorList>
            <person name="Bell K.S."/>
            <person name="Sebaihia M."/>
            <person name="Pritchard L."/>
            <person name="Holden M.T.G."/>
            <person name="Hyman L.J."/>
            <person name="Holeva M.C."/>
            <person name="Thomson N.R."/>
            <person name="Bentley S.D."/>
            <person name="Churcher L.J.C."/>
            <person name="Mungall K."/>
            <person name="Atkin R."/>
            <person name="Bason N."/>
            <person name="Brooks K."/>
            <person name="Chillingworth T."/>
            <person name="Clark K."/>
            <person name="Doggett J."/>
            <person name="Fraser A."/>
            <person name="Hance Z."/>
            <person name="Hauser H."/>
            <person name="Jagels K."/>
            <person name="Moule S."/>
            <person name="Norbertczak H."/>
            <person name="Ormond D."/>
            <person name="Price C."/>
            <person name="Quail M.A."/>
            <person name="Sanders M."/>
            <person name="Walker D."/>
            <person name="Whitehead S."/>
            <person name="Salmond G.P.C."/>
            <person name="Birch P.R.J."/>
            <person name="Parkhill J."/>
            <person name="Toth I.K."/>
        </authorList>
    </citation>
    <scope>NUCLEOTIDE SEQUENCE [LARGE SCALE GENOMIC DNA]</scope>
    <source>
        <strain>SCRI 1043 / ATCC BAA-672</strain>
    </source>
</reference>
<protein>
    <recommendedName>
        <fullName evidence="1">Adenylate kinase</fullName>
        <shortName evidence="1">AK</shortName>
        <ecNumber evidence="1">2.7.4.3</ecNumber>
    </recommendedName>
    <alternativeName>
        <fullName evidence="1">ATP-AMP transphosphorylase</fullName>
    </alternativeName>
    <alternativeName>
        <fullName evidence="1">ATP:AMP phosphotransferase</fullName>
    </alternativeName>
    <alternativeName>
        <fullName evidence="1">Adenylate monophosphate kinase</fullName>
    </alternativeName>
</protein>